<dbReference type="EC" id="6.1.1.11" evidence="1"/>
<dbReference type="EMBL" id="CP000348">
    <property type="protein sequence ID" value="ABJ80291.1"/>
    <property type="molecule type" value="Genomic_DNA"/>
</dbReference>
<dbReference type="RefSeq" id="WP_011671192.1">
    <property type="nucleotide sequence ID" value="NC_008508.1"/>
</dbReference>
<dbReference type="SMR" id="Q04XA4"/>
<dbReference type="KEGG" id="lbl:LBL_2978"/>
<dbReference type="HOGENOM" id="CLU_023797_1_1_12"/>
<dbReference type="UniPathway" id="UPA00906">
    <property type="reaction ID" value="UER00895"/>
</dbReference>
<dbReference type="GO" id="GO:0005737">
    <property type="term" value="C:cytoplasm"/>
    <property type="evidence" value="ECO:0007669"/>
    <property type="project" value="UniProtKB-SubCell"/>
</dbReference>
<dbReference type="GO" id="GO:0005524">
    <property type="term" value="F:ATP binding"/>
    <property type="evidence" value="ECO:0007669"/>
    <property type="project" value="UniProtKB-UniRule"/>
</dbReference>
<dbReference type="GO" id="GO:0004828">
    <property type="term" value="F:serine-tRNA ligase activity"/>
    <property type="evidence" value="ECO:0007669"/>
    <property type="project" value="UniProtKB-UniRule"/>
</dbReference>
<dbReference type="GO" id="GO:0016260">
    <property type="term" value="P:selenocysteine biosynthetic process"/>
    <property type="evidence" value="ECO:0007669"/>
    <property type="project" value="UniProtKB-UniRule"/>
</dbReference>
<dbReference type="GO" id="GO:0006434">
    <property type="term" value="P:seryl-tRNA aminoacylation"/>
    <property type="evidence" value="ECO:0007669"/>
    <property type="project" value="UniProtKB-UniRule"/>
</dbReference>
<dbReference type="CDD" id="cd00770">
    <property type="entry name" value="SerRS_core"/>
    <property type="match status" value="1"/>
</dbReference>
<dbReference type="Gene3D" id="3.30.930.10">
    <property type="entry name" value="Bira Bifunctional Protein, Domain 2"/>
    <property type="match status" value="1"/>
</dbReference>
<dbReference type="Gene3D" id="1.10.287.40">
    <property type="entry name" value="Serine-tRNA synthetase, tRNA binding domain"/>
    <property type="match status" value="1"/>
</dbReference>
<dbReference type="HAMAP" id="MF_00176">
    <property type="entry name" value="Ser_tRNA_synth_type1"/>
    <property type="match status" value="1"/>
</dbReference>
<dbReference type="InterPro" id="IPR002314">
    <property type="entry name" value="aa-tRNA-synt_IIb"/>
</dbReference>
<dbReference type="InterPro" id="IPR006195">
    <property type="entry name" value="aa-tRNA-synth_II"/>
</dbReference>
<dbReference type="InterPro" id="IPR045864">
    <property type="entry name" value="aa-tRNA-synth_II/BPL/LPL"/>
</dbReference>
<dbReference type="InterPro" id="IPR002317">
    <property type="entry name" value="Ser-tRNA-ligase_type_1"/>
</dbReference>
<dbReference type="InterPro" id="IPR015866">
    <property type="entry name" value="Ser-tRNA-synth_1_N"/>
</dbReference>
<dbReference type="InterPro" id="IPR042103">
    <property type="entry name" value="SerRS_1_N_sf"/>
</dbReference>
<dbReference type="InterPro" id="IPR033729">
    <property type="entry name" value="SerRS_core"/>
</dbReference>
<dbReference type="InterPro" id="IPR010978">
    <property type="entry name" value="tRNA-bd_arm"/>
</dbReference>
<dbReference type="NCBIfam" id="TIGR00414">
    <property type="entry name" value="serS"/>
    <property type="match status" value="1"/>
</dbReference>
<dbReference type="PANTHER" id="PTHR43697:SF1">
    <property type="entry name" value="SERINE--TRNA LIGASE"/>
    <property type="match status" value="1"/>
</dbReference>
<dbReference type="PANTHER" id="PTHR43697">
    <property type="entry name" value="SERYL-TRNA SYNTHETASE"/>
    <property type="match status" value="1"/>
</dbReference>
<dbReference type="Pfam" id="PF02403">
    <property type="entry name" value="Seryl_tRNA_N"/>
    <property type="match status" value="1"/>
</dbReference>
<dbReference type="Pfam" id="PF00587">
    <property type="entry name" value="tRNA-synt_2b"/>
    <property type="match status" value="1"/>
</dbReference>
<dbReference type="PIRSF" id="PIRSF001529">
    <property type="entry name" value="Ser-tRNA-synth_IIa"/>
    <property type="match status" value="1"/>
</dbReference>
<dbReference type="PRINTS" id="PR00981">
    <property type="entry name" value="TRNASYNTHSER"/>
</dbReference>
<dbReference type="SUPFAM" id="SSF55681">
    <property type="entry name" value="Class II aaRS and biotin synthetases"/>
    <property type="match status" value="1"/>
</dbReference>
<dbReference type="SUPFAM" id="SSF46589">
    <property type="entry name" value="tRNA-binding arm"/>
    <property type="match status" value="1"/>
</dbReference>
<dbReference type="PROSITE" id="PS50862">
    <property type="entry name" value="AA_TRNA_LIGASE_II"/>
    <property type="match status" value="1"/>
</dbReference>
<sequence length="417" mass="47842">MLDLHYITENTEDLKKVLELRGFKEVGIIDELKSIIQRKRELQREVDLLREERNKVSKEVGRIKQSGGDITEISASVKLVGEKIKEIETKLEQEENVLININLGLPNILDPKVPNGKSEYDNVVQYEVGKIPSFSFPPKPHFEIGEALNWINFEKGVKLSGARAYTYWKDGAKLERALMNFMLDVHTKEHGYTEVWVPSMVNDESMTATGQYPKFKDEFYRIEKDELNLIPTAEVPLTNLYRDEIIPEDQLPISVTAHTSCFRREAGSYGKDTRGLVRVHQFQKVELVKFCKPEDSEEEHKKMLSHAENILKKLKLPYRVIILCSGDISANSSITYDIEVWMPGLNRFMEISSVSNFRDFQARRGKIRYKSKDGKNQLVHTINGSGLAIGRTYAAILENFQDANGTVHIPEVLKSYF</sequence>
<feature type="chain" id="PRO_1000019718" description="Serine--tRNA ligase">
    <location>
        <begin position="1"/>
        <end position="417"/>
    </location>
</feature>
<feature type="binding site" evidence="1">
    <location>
        <begin position="232"/>
        <end position="234"/>
    </location>
    <ligand>
        <name>L-serine</name>
        <dbReference type="ChEBI" id="CHEBI:33384"/>
    </ligand>
</feature>
<feature type="binding site" evidence="1">
    <location>
        <begin position="263"/>
        <end position="265"/>
    </location>
    <ligand>
        <name>ATP</name>
        <dbReference type="ChEBI" id="CHEBI:30616"/>
    </ligand>
</feature>
<feature type="binding site" evidence="1">
    <location>
        <position position="279"/>
    </location>
    <ligand>
        <name>ATP</name>
        <dbReference type="ChEBI" id="CHEBI:30616"/>
    </ligand>
</feature>
<feature type="binding site" evidence="1">
    <location>
        <position position="286"/>
    </location>
    <ligand>
        <name>L-serine</name>
        <dbReference type="ChEBI" id="CHEBI:33384"/>
    </ligand>
</feature>
<feature type="binding site" evidence="1">
    <location>
        <begin position="350"/>
        <end position="353"/>
    </location>
    <ligand>
        <name>ATP</name>
        <dbReference type="ChEBI" id="CHEBI:30616"/>
    </ligand>
</feature>
<feature type="binding site" evidence="1">
    <location>
        <position position="385"/>
    </location>
    <ligand>
        <name>L-serine</name>
        <dbReference type="ChEBI" id="CHEBI:33384"/>
    </ligand>
</feature>
<reference key="1">
    <citation type="journal article" date="2006" name="Proc. Natl. Acad. Sci. U.S.A.">
        <title>Genome reduction in Leptospira borgpetersenii reflects limited transmission potential.</title>
        <authorList>
            <person name="Bulach D.M."/>
            <person name="Zuerner R.L."/>
            <person name="Wilson P."/>
            <person name="Seemann T."/>
            <person name="McGrath A."/>
            <person name="Cullen P.A."/>
            <person name="Davis J."/>
            <person name="Johnson M."/>
            <person name="Kuczek E."/>
            <person name="Alt D.P."/>
            <person name="Peterson-Burch B."/>
            <person name="Coppel R.L."/>
            <person name="Rood J.I."/>
            <person name="Davies J.K."/>
            <person name="Adler B."/>
        </authorList>
    </citation>
    <scope>NUCLEOTIDE SEQUENCE [LARGE SCALE GENOMIC DNA]</scope>
    <source>
        <strain>L550</strain>
    </source>
</reference>
<organism>
    <name type="scientific">Leptospira borgpetersenii serovar Hardjo-bovis (strain L550)</name>
    <dbReference type="NCBI Taxonomy" id="355276"/>
    <lineage>
        <taxon>Bacteria</taxon>
        <taxon>Pseudomonadati</taxon>
        <taxon>Spirochaetota</taxon>
        <taxon>Spirochaetia</taxon>
        <taxon>Leptospirales</taxon>
        <taxon>Leptospiraceae</taxon>
        <taxon>Leptospira</taxon>
    </lineage>
</organism>
<evidence type="ECO:0000255" key="1">
    <source>
        <dbReference type="HAMAP-Rule" id="MF_00176"/>
    </source>
</evidence>
<gene>
    <name evidence="1" type="primary">serS</name>
    <name type="ordered locus">LBL_2978</name>
</gene>
<protein>
    <recommendedName>
        <fullName evidence="1">Serine--tRNA ligase</fullName>
        <ecNumber evidence="1">6.1.1.11</ecNumber>
    </recommendedName>
    <alternativeName>
        <fullName evidence="1">Seryl-tRNA synthetase</fullName>
        <shortName evidence="1">SerRS</shortName>
    </alternativeName>
    <alternativeName>
        <fullName evidence="1">Seryl-tRNA(Ser/Sec) synthetase</fullName>
    </alternativeName>
</protein>
<name>SYS_LEPBL</name>
<keyword id="KW-0030">Aminoacyl-tRNA synthetase</keyword>
<keyword id="KW-0067">ATP-binding</keyword>
<keyword id="KW-0963">Cytoplasm</keyword>
<keyword id="KW-0436">Ligase</keyword>
<keyword id="KW-0547">Nucleotide-binding</keyword>
<keyword id="KW-0648">Protein biosynthesis</keyword>
<accession>Q04XA4</accession>
<proteinExistence type="inferred from homology"/>
<comment type="function">
    <text evidence="1">Catalyzes the attachment of serine to tRNA(Ser). Is also able to aminoacylate tRNA(Sec) with serine, to form the misacylated tRNA L-seryl-tRNA(Sec), which will be further converted into selenocysteinyl-tRNA(Sec).</text>
</comment>
<comment type="catalytic activity">
    <reaction evidence="1">
        <text>tRNA(Ser) + L-serine + ATP = L-seryl-tRNA(Ser) + AMP + diphosphate + H(+)</text>
        <dbReference type="Rhea" id="RHEA:12292"/>
        <dbReference type="Rhea" id="RHEA-COMP:9669"/>
        <dbReference type="Rhea" id="RHEA-COMP:9703"/>
        <dbReference type="ChEBI" id="CHEBI:15378"/>
        <dbReference type="ChEBI" id="CHEBI:30616"/>
        <dbReference type="ChEBI" id="CHEBI:33019"/>
        <dbReference type="ChEBI" id="CHEBI:33384"/>
        <dbReference type="ChEBI" id="CHEBI:78442"/>
        <dbReference type="ChEBI" id="CHEBI:78533"/>
        <dbReference type="ChEBI" id="CHEBI:456215"/>
        <dbReference type="EC" id="6.1.1.11"/>
    </reaction>
</comment>
<comment type="catalytic activity">
    <reaction evidence="1">
        <text>tRNA(Sec) + L-serine + ATP = L-seryl-tRNA(Sec) + AMP + diphosphate + H(+)</text>
        <dbReference type="Rhea" id="RHEA:42580"/>
        <dbReference type="Rhea" id="RHEA-COMP:9742"/>
        <dbReference type="Rhea" id="RHEA-COMP:10128"/>
        <dbReference type="ChEBI" id="CHEBI:15378"/>
        <dbReference type="ChEBI" id="CHEBI:30616"/>
        <dbReference type="ChEBI" id="CHEBI:33019"/>
        <dbReference type="ChEBI" id="CHEBI:33384"/>
        <dbReference type="ChEBI" id="CHEBI:78442"/>
        <dbReference type="ChEBI" id="CHEBI:78533"/>
        <dbReference type="ChEBI" id="CHEBI:456215"/>
        <dbReference type="EC" id="6.1.1.11"/>
    </reaction>
</comment>
<comment type="pathway">
    <text evidence="1">Aminoacyl-tRNA biosynthesis; selenocysteinyl-tRNA(Sec) biosynthesis; L-seryl-tRNA(Sec) from L-serine and tRNA(Sec): step 1/1.</text>
</comment>
<comment type="subunit">
    <text evidence="1">Homodimer. The tRNA molecule binds across the dimer.</text>
</comment>
<comment type="subcellular location">
    <subcellularLocation>
        <location evidence="1">Cytoplasm</location>
    </subcellularLocation>
</comment>
<comment type="domain">
    <text evidence="1">Consists of two distinct domains, a catalytic core and a N-terminal extension that is involved in tRNA binding.</text>
</comment>
<comment type="similarity">
    <text evidence="1">Belongs to the class-II aminoacyl-tRNA synthetase family. Type-1 seryl-tRNA synthetase subfamily.</text>
</comment>